<geneLocation type="chloroplast"/>
<dbReference type="EMBL" id="AF041468">
    <property type="protein sequence ID" value="AAC35616.1"/>
    <property type="molecule type" value="Genomic_DNA"/>
</dbReference>
<dbReference type="RefSeq" id="NP_050682.1">
    <property type="nucleotide sequence ID" value="NC_000926.1"/>
</dbReference>
<dbReference type="GeneID" id="1444457"/>
<dbReference type="HOGENOM" id="CLU_1104517_0_0_1"/>
<dbReference type="GO" id="GO:0009507">
    <property type="term" value="C:chloroplast"/>
    <property type="evidence" value="ECO:0007669"/>
    <property type="project" value="UniProtKB-SubCell"/>
</dbReference>
<protein>
    <recommendedName>
        <fullName>Uncharacterized 30.1 kDa protein</fullName>
    </recommendedName>
    <alternativeName>
        <fullName>ORF252</fullName>
    </alternativeName>
</protein>
<accession>O78431</accession>
<organism>
    <name type="scientific">Guillardia theta</name>
    <name type="common">Cryptophyte</name>
    <name type="synonym">Cryptomonas phi</name>
    <dbReference type="NCBI Taxonomy" id="55529"/>
    <lineage>
        <taxon>Eukaryota</taxon>
        <taxon>Cryptophyceae</taxon>
        <taxon>Pyrenomonadales</taxon>
        <taxon>Geminigeraceae</taxon>
        <taxon>Guillardia</taxon>
    </lineage>
</organism>
<keyword id="KW-0150">Chloroplast</keyword>
<keyword id="KW-0934">Plastid</keyword>
<reference key="1">
    <citation type="journal article" date="1999" name="J. Mol. Evol.">
        <title>The plastid genome of the cryptophyte alga, Guillardia theta: complete sequence and conserved synteny groups confirm its common ancestry with red algae.</title>
        <authorList>
            <person name="Douglas S.E."/>
            <person name="Penny S.L."/>
        </authorList>
    </citation>
    <scope>NUCLEOTIDE SEQUENCE [LARGE SCALE GENOMIC DNA]</scope>
</reference>
<feature type="chain" id="PRO_0000217444" description="Uncharacterized 30.1 kDa protein">
    <location>
        <begin position="1"/>
        <end position="252"/>
    </location>
</feature>
<sequence length="252" mass="30095">MKFNNLKISLELLFLYAQIKVKLTHLKHYSTRCSTLSLITVFPLDLLNYLSLIIIDVYYEICINYPNNFWLDSTSFDSRFLFILQNIEKKILRHNNYELLTKSINFKNYNLFLSSANLITHEDEKLFIWFFHILSEILIHKHKSSTISVKLLSIVGVHLIVKTLLIFLLLINNQSVVNSIFLSDSKIYHPQFINFNFWWQNLNQLVLRRIYSLYPIYVIKNNVLTTNYVFLPYFNSYLLQSNLTTWFSKLLK</sequence>
<name>YCX3_GUITH</name>
<comment type="subcellular location">
    <subcellularLocation>
        <location>Plastid</location>
        <location>Chloroplast</location>
    </subcellularLocation>
</comment>
<proteinExistence type="predicted"/>